<sequence>MEKREVNKALYDLQRSAMVYSSNDTPPRWSTTMDADTRPTDSDADAIIDDVSREKSMREDHKSFDDVIPVKKIIYWKGVNPVTVINEYCQITRRDWSFRIESVGPSNSPTFYACVDIDGRVFDKADGKSKRDAKNNAAKLAVDKLLSYVIIRF</sequence>
<keyword id="KW-0945">Host-virus interaction</keyword>
<keyword id="KW-1090">Inhibition of host innate immune response by virus</keyword>
<keyword id="KW-1114">Inhibition of host interferon signaling pathway by virus</keyword>
<keyword id="KW-1092">Inhibition of host IRF3 by virus</keyword>
<keyword id="KW-1093">Inhibition of host IRF7 by virus</keyword>
<keyword id="KW-1095">Inhibition of host ISG15 by virus</keyword>
<keyword id="KW-1102">Inhibition of host PKR by virus</keyword>
<keyword id="KW-1113">Inhibition of host RLR pathway by virus</keyword>
<keyword id="KW-0922">Interferon antiviral system evasion</keyword>
<keyword id="KW-1119">Modulation of host cell apoptosis by virus</keyword>
<keyword id="KW-1185">Reference proteome</keyword>
<keyword id="KW-0694">RNA-binding</keyword>
<keyword id="KW-0899">Viral immunoevasion</keyword>
<feature type="chain" id="PRO_0000457701" description="RNA-binding protein OPG065">
    <location>
        <begin position="1"/>
        <end position="153"/>
    </location>
</feature>
<feature type="domain" description="Z-binding" evidence="2">
    <location>
        <begin position="1"/>
        <end position="33"/>
    </location>
</feature>
<feature type="domain" description="DRBM" evidence="3">
    <location>
        <begin position="80"/>
        <end position="147"/>
    </location>
</feature>
<feature type="region of interest" description="Disordered" evidence="4">
    <location>
        <begin position="22"/>
        <end position="44"/>
    </location>
</feature>
<feature type="compositionally biased region" description="Polar residues" evidence="4">
    <location>
        <begin position="22"/>
        <end position="34"/>
    </location>
</feature>
<protein>
    <recommendedName>
        <fullName>RNA-binding protein OPG065</fullName>
    </recommendedName>
</protein>
<evidence type="ECO:0000250" key="1">
    <source>
        <dbReference type="UniProtKB" id="P21605"/>
    </source>
</evidence>
<evidence type="ECO:0000255" key="2">
    <source>
        <dbReference type="PROSITE-ProRule" id="PRU00073"/>
    </source>
</evidence>
<evidence type="ECO:0000255" key="3">
    <source>
        <dbReference type="PROSITE-ProRule" id="PRU00266"/>
    </source>
</evidence>
<evidence type="ECO:0000256" key="4">
    <source>
        <dbReference type="SAM" id="MobiDB-lite"/>
    </source>
</evidence>
<evidence type="ECO:0000305" key="5"/>
<accession>A0A7H0DN38</accession>
<gene>
    <name type="primary">OPG065</name>
    <name type="ORF">MPXVgp052</name>
</gene>
<comment type="function">
    <text evidence="1">RNA-binding protein that plays a role in the inhibition of multiple cellular antiviral responses activated by double-stranded RNA (dsRNA), such as inhibition of PKR activation, necroptosis, and IFN-mediated antiviral activities. Recognizes and binds Z-RNA structures via its Z-binding domain and dsRNA via its DRBM domain: RNA-binding activity is required to escape host ZBP1-dependent necroptosis. Mechanistically, the Z-binding domain binds Z-RNAs that are produced during vaccinia virus infection, thereby competing with Z-RNA detection by host ZBP1, suppressing ZBP1-dependent necroptosis. Acts as a key inhibitor of the interferon response by blocking the phosphorylation and subsequent activation of IRF3 and IRF7 kinases that are required for interferon-alpha gene expression. Inhibits NF-kappa-B activation and the ubiquitin-like protein ISG15, which is an early antiviral protein. The binding with host ISG15 subsequently blocks host ISGylation.</text>
</comment>
<comment type="subunit">
    <text evidence="1">Interacts with host G1P2/ISG15. Interacts with host EIF2AK2/PKR. Interacts with host ZBP1.</text>
</comment>
<comment type="domain">
    <text evidence="1">The Z-binding domain recognizes and binds Z-RNA structures.</text>
</comment>
<comment type="similarity">
    <text evidence="5">Belongs to the orthopoxvirus OPG065 family.</text>
</comment>
<organism>
    <name type="scientific">Monkeypox virus</name>
    <dbReference type="NCBI Taxonomy" id="10244"/>
    <lineage>
        <taxon>Viruses</taxon>
        <taxon>Varidnaviria</taxon>
        <taxon>Bamfordvirae</taxon>
        <taxon>Nucleocytoviricota</taxon>
        <taxon>Pokkesviricetes</taxon>
        <taxon>Chitovirales</taxon>
        <taxon>Poxviridae</taxon>
        <taxon>Chordopoxvirinae</taxon>
        <taxon>Orthopoxvirus</taxon>
    </lineage>
</organism>
<name>PG065_MONPV</name>
<organismHost>
    <name type="scientific">Cynomys gunnisoni</name>
    <name type="common">Gunnison's prairie dog</name>
    <name type="synonym">Spermophilus gunnisoni</name>
    <dbReference type="NCBI Taxonomy" id="45479"/>
</organismHost>
<organismHost>
    <name type="scientific">Cynomys leucurus</name>
    <name type="common">White-tailed prairie dog</name>
    <dbReference type="NCBI Taxonomy" id="99825"/>
</organismHost>
<organismHost>
    <name type="scientific">Cynomys ludovicianus</name>
    <name type="common">Black-tailed prairie dog</name>
    <dbReference type="NCBI Taxonomy" id="45480"/>
</organismHost>
<organismHost>
    <name type="scientific">Cynomys mexicanus</name>
    <name type="common">Mexican prairie dog</name>
    <dbReference type="NCBI Taxonomy" id="99826"/>
</organismHost>
<organismHost>
    <name type="scientific">Cynomys parvidens</name>
    <name type="common">Utah prairie dog</name>
    <dbReference type="NCBI Taxonomy" id="99827"/>
</organismHost>
<organismHost>
    <name type="scientific">Gliridae</name>
    <name type="common">dormice</name>
    <dbReference type="NCBI Taxonomy" id="30650"/>
</organismHost>
<organismHost>
    <name type="scientific">Heliosciurus ruwenzorii</name>
    <name type="common">Ruwenzori sun squirrel</name>
    <dbReference type="NCBI Taxonomy" id="226685"/>
</organismHost>
<organismHost>
    <name type="scientific">Homo sapiens</name>
    <name type="common">Human</name>
    <dbReference type="NCBI Taxonomy" id="9606"/>
</organismHost>
<organismHost>
    <name type="scientific">Mus musculus</name>
    <name type="common">Mouse</name>
    <dbReference type="NCBI Taxonomy" id="10090"/>
</organismHost>
<dbReference type="EMBL" id="MT903340">
    <property type="protein sequence ID" value="QNP12921.1"/>
    <property type="molecule type" value="Genomic_DNA"/>
</dbReference>
<dbReference type="RefSeq" id="YP_010377048.1">
    <property type="nucleotide sequence ID" value="NC_063383.1"/>
</dbReference>
<dbReference type="SMR" id="A0A7H0DN38"/>
<dbReference type="GeneID" id="72551461"/>
<dbReference type="Proteomes" id="UP000516359">
    <property type="component" value="Genome"/>
</dbReference>
<dbReference type="GO" id="GO:0003726">
    <property type="term" value="F:double-stranded RNA adenosine deaminase activity"/>
    <property type="evidence" value="ECO:0007669"/>
    <property type="project" value="InterPro"/>
</dbReference>
<dbReference type="GO" id="GO:0030291">
    <property type="term" value="F:protein serine/threonine kinase inhibitor activity"/>
    <property type="evidence" value="ECO:0007669"/>
    <property type="project" value="UniProtKB-KW"/>
</dbReference>
<dbReference type="GO" id="GO:0003723">
    <property type="term" value="F:RNA binding"/>
    <property type="evidence" value="ECO:0007669"/>
    <property type="project" value="UniProtKB-KW"/>
</dbReference>
<dbReference type="GO" id="GO:0052150">
    <property type="term" value="P:symbiont-mediated perturbation of host apoptosis"/>
    <property type="evidence" value="ECO:0007669"/>
    <property type="project" value="UniProtKB-KW"/>
</dbReference>
<dbReference type="GO" id="GO:0039548">
    <property type="term" value="P:symbiont-mediated suppression of host cytoplasmic pattern recognition receptor signaling pathway via inhibition of IRF3 activity"/>
    <property type="evidence" value="ECO:0007669"/>
    <property type="project" value="UniProtKB-KW"/>
</dbReference>
<dbReference type="GO" id="GO:0039557">
    <property type="term" value="P:symbiont-mediated suppression of host cytoplasmic pattern recognition receptor signaling pathway via inhibition of IRF7 activity"/>
    <property type="evidence" value="ECO:0007669"/>
    <property type="project" value="UniProtKB-KW"/>
</dbReference>
<dbReference type="GO" id="GO:0039579">
    <property type="term" value="P:symbiont-mediated suppression of host ISG15-protein conjugation"/>
    <property type="evidence" value="ECO:0007669"/>
    <property type="project" value="UniProtKB-KW"/>
</dbReference>
<dbReference type="GO" id="GO:0039580">
    <property type="term" value="P:symbiont-mediated suppression of host PKR/eIFalpha signaling"/>
    <property type="evidence" value="ECO:0007669"/>
    <property type="project" value="UniProtKB-KW"/>
</dbReference>
<dbReference type="GO" id="GO:0039502">
    <property type="term" value="P:symbiont-mediated suppression of host type I interferon-mediated signaling pathway"/>
    <property type="evidence" value="ECO:0007669"/>
    <property type="project" value="UniProtKB-KW"/>
</dbReference>
<dbReference type="CDD" id="cd19875">
    <property type="entry name" value="DSRM_EIF2AK2-like"/>
    <property type="match status" value="1"/>
</dbReference>
<dbReference type="FunFam" id="3.30.160.20:FF:000108">
    <property type="entry name" value="Double-stranded RNA-binding protein"/>
    <property type="match status" value="1"/>
</dbReference>
<dbReference type="Gene3D" id="3.30.160.20">
    <property type="match status" value="1"/>
</dbReference>
<dbReference type="Gene3D" id="1.10.10.10">
    <property type="entry name" value="Winged helix-like DNA-binding domain superfamily/Winged helix DNA-binding domain"/>
    <property type="match status" value="1"/>
</dbReference>
<dbReference type="InterPro" id="IPR014720">
    <property type="entry name" value="dsRBD_dom"/>
</dbReference>
<dbReference type="InterPro" id="IPR009179">
    <property type="entry name" value="E3L"/>
</dbReference>
<dbReference type="InterPro" id="IPR036388">
    <property type="entry name" value="WH-like_DNA-bd_sf"/>
</dbReference>
<dbReference type="InterPro" id="IPR036390">
    <property type="entry name" value="WH_DNA-bd_sf"/>
</dbReference>
<dbReference type="InterPro" id="IPR042371">
    <property type="entry name" value="Z_dom"/>
</dbReference>
<dbReference type="Pfam" id="PF00035">
    <property type="entry name" value="dsrm"/>
    <property type="match status" value="1"/>
</dbReference>
<dbReference type="Pfam" id="PF02295">
    <property type="entry name" value="z-alpha"/>
    <property type="match status" value="1"/>
</dbReference>
<dbReference type="PIRSF" id="PIRSF004008">
    <property type="entry name" value="VAC_E3L"/>
    <property type="match status" value="1"/>
</dbReference>
<dbReference type="SMART" id="SM00358">
    <property type="entry name" value="DSRM"/>
    <property type="match status" value="1"/>
</dbReference>
<dbReference type="SUPFAM" id="SSF54768">
    <property type="entry name" value="dsRNA-binding domain-like"/>
    <property type="match status" value="1"/>
</dbReference>
<dbReference type="SUPFAM" id="SSF46785">
    <property type="entry name" value="Winged helix' DNA-binding domain"/>
    <property type="match status" value="1"/>
</dbReference>
<dbReference type="PROSITE" id="PS50137">
    <property type="entry name" value="DS_RBD"/>
    <property type="match status" value="1"/>
</dbReference>
<dbReference type="PROSITE" id="PS50139">
    <property type="entry name" value="Z_BINDING"/>
    <property type="match status" value="1"/>
</dbReference>
<reference key="1">
    <citation type="journal article" date="2022" name="J. Infect. Dis.">
        <title>Exportation of Monkeypox virus from the African continent.</title>
        <authorList>
            <person name="Mauldin M.R."/>
            <person name="McCollum A.M."/>
            <person name="Nakazawa Y.J."/>
            <person name="Mandra A."/>
            <person name="Whitehouse E.R."/>
            <person name="Davidson W."/>
            <person name="Zhao H."/>
            <person name="Gao J."/>
            <person name="Li Y."/>
            <person name="Doty J."/>
            <person name="Yinka-Ogunleye A."/>
            <person name="Akinpelu A."/>
            <person name="Aruna O."/>
            <person name="Naidoo D."/>
            <person name="Lewandowski K."/>
            <person name="Afrough B."/>
            <person name="Graham V."/>
            <person name="Aarons E."/>
            <person name="Hewson R."/>
            <person name="Vipond R."/>
            <person name="Dunning J."/>
            <person name="Chand M."/>
            <person name="Brown C."/>
            <person name="Cohen-Gihon I."/>
            <person name="Erez N."/>
            <person name="Shifman O."/>
            <person name="Israeli O."/>
            <person name="Sharon M."/>
            <person name="Schwartz E."/>
            <person name="Beth-Din A."/>
            <person name="Zvi A."/>
            <person name="Mak T.M."/>
            <person name="Ng Y.K."/>
            <person name="Cui L."/>
            <person name="Lin R.T.P."/>
            <person name="Olson V.A."/>
            <person name="Brooks T."/>
            <person name="Paran N."/>
            <person name="Ihekweazu C."/>
            <person name="Reynolds M.G."/>
        </authorList>
    </citation>
    <scope>NUCLEOTIDE SEQUENCE [LARGE SCALE GENOMIC DNA]</scope>
    <source>
        <strain>MPXV-M5312_HM12_Rivers</strain>
    </source>
</reference>
<proteinExistence type="inferred from homology"/>